<evidence type="ECO:0000250" key="1"/>
<evidence type="ECO:0000255" key="2">
    <source>
        <dbReference type="PROSITE-ProRule" id="PRU00362"/>
    </source>
</evidence>
<evidence type="ECO:0000255" key="3">
    <source>
        <dbReference type="PROSITE-ProRule" id="PRU00434"/>
    </source>
</evidence>
<evidence type="ECO:0000255" key="4">
    <source>
        <dbReference type="PROSITE-ProRule" id="PRU00441"/>
    </source>
</evidence>
<evidence type="ECO:0000305" key="5"/>
<keyword id="KW-0045">Antibiotic biosynthesis</keyword>
<keyword id="KW-0067">ATP-binding</keyword>
<keyword id="KW-0080">Bacteriocin transport</keyword>
<keyword id="KW-1043">Host membrane</keyword>
<keyword id="KW-0378">Hydrolase</keyword>
<keyword id="KW-0472">Membrane</keyword>
<keyword id="KW-0547">Nucleotide-binding</keyword>
<keyword id="KW-0645">Protease</keyword>
<keyword id="KW-0653">Protein transport</keyword>
<keyword id="KW-1185">Reference proteome</keyword>
<keyword id="KW-0788">Thiol protease</keyword>
<keyword id="KW-1278">Translocase</keyword>
<keyword id="KW-0812">Transmembrane</keyword>
<keyword id="KW-1133">Transmembrane helix</keyword>
<keyword id="KW-0813">Transport</keyword>
<dbReference type="EC" id="3.4.22.-"/>
<dbReference type="EC" id="7.-.-.-"/>
<dbReference type="EMBL" id="AF020713">
    <property type="protein sequence ID" value="AAC12993.1"/>
    <property type="molecule type" value="Genomic_DNA"/>
</dbReference>
<dbReference type="PIR" id="T12784">
    <property type="entry name" value="T12784"/>
</dbReference>
<dbReference type="SMR" id="P68580"/>
<dbReference type="MEROPS" id="C39.A03"/>
<dbReference type="KEGG" id="vg:1261465"/>
<dbReference type="Proteomes" id="UP000009091">
    <property type="component" value="Genome"/>
</dbReference>
<dbReference type="GO" id="GO:0033644">
    <property type="term" value="C:host cell membrane"/>
    <property type="evidence" value="ECO:0007669"/>
    <property type="project" value="UniProtKB-SubCell"/>
</dbReference>
<dbReference type="GO" id="GO:0016020">
    <property type="term" value="C:membrane"/>
    <property type="evidence" value="ECO:0007669"/>
    <property type="project" value="UniProtKB-KW"/>
</dbReference>
<dbReference type="GO" id="GO:0140359">
    <property type="term" value="F:ABC-type transporter activity"/>
    <property type="evidence" value="ECO:0007669"/>
    <property type="project" value="InterPro"/>
</dbReference>
<dbReference type="GO" id="GO:0005524">
    <property type="term" value="F:ATP binding"/>
    <property type="evidence" value="ECO:0007669"/>
    <property type="project" value="UniProtKB-KW"/>
</dbReference>
<dbReference type="GO" id="GO:0016887">
    <property type="term" value="F:ATP hydrolysis activity"/>
    <property type="evidence" value="ECO:0007669"/>
    <property type="project" value="InterPro"/>
</dbReference>
<dbReference type="GO" id="GO:0034040">
    <property type="term" value="F:ATPase-coupled lipid transmembrane transporter activity"/>
    <property type="evidence" value="ECO:0007669"/>
    <property type="project" value="TreeGrafter"/>
</dbReference>
<dbReference type="GO" id="GO:0008234">
    <property type="term" value="F:cysteine-type peptidase activity"/>
    <property type="evidence" value="ECO:0007669"/>
    <property type="project" value="UniProtKB-KW"/>
</dbReference>
<dbReference type="GO" id="GO:0017000">
    <property type="term" value="P:antibiotic biosynthetic process"/>
    <property type="evidence" value="ECO:0007669"/>
    <property type="project" value="UniProtKB-KW"/>
</dbReference>
<dbReference type="GO" id="GO:0043213">
    <property type="term" value="P:bacteriocin transport"/>
    <property type="evidence" value="ECO:0007669"/>
    <property type="project" value="UniProtKB-KW"/>
</dbReference>
<dbReference type="GO" id="GO:0015031">
    <property type="term" value="P:protein transport"/>
    <property type="evidence" value="ECO:0007669"/>
    <property type="project" value="UniProtKB-KW"/>
</dbReference>
<dbReference type="GO" id="GO:0006508">
    <property type="term" value="P:proteolysis"/>
    <property type="evidence" value="ECO:0007669"/>
    <property type="project" value="UniProtKB-KW"/>
</dbReference>
<dbReference type="CDD" id="cd18570">
    <property type="entry name" value="ABC_6TM_PCAT1_LagD_like"/>
    <property type="match status" value="1"/>
</dbReference>
<dbReference type="CDD" id="cd03228">
    <property type="entry name" value="ABCC_MRP_Like"/>
    <property type="match status" value="1"/>
</dbReference>
<dbReference type="CDD" id="cd02418">
    <property type="entry name" value="Peptidase_C39B"/>
    <property type="match status" value="1"/>
</dbReference>
<dbReference type="Gene3D" id="1.20.1560.10">
    <property type="entry name" value="ABC transporter type 1, transmembrane domain"/>
    <property type="match status" value="1"/>
</dbReference>
<dbReference type="Gene3D" id="3.90.70.10">
    <property type="entry name" value="Cysteine proteinases"/>
    <property type="match status" value="1"/>
</dbReference>
<dbReference type="Gene3D" id="3.40.50.300">
    <property type="entry name" value="P-loop containing nucleotide triphosphate hydrolases"/>
    <property type="match status" value="1"/>
</dbReference>
<dbReference type="InterPro" id="IPR003593">
    <property type="entry name" value="AAA+_ATPase"/>
</dbReference>
<dbReference type="InterPro" id="IPR011527">
    <property type="entry name" value="ABC1_TM_dom"/>
</dbReference>
<dbReference type="InterPro" id="IPR036640">
    <property type="entry name" value="ABC1_TM_sf"/>
</dbReference>
<dbReference type="InterPro" id="IPR003439">
    <property type="entry name" value="ABC_transporter-like_ATP-bd"/>
</dbReference>
<dbReference type="InterPro" id="IPR027417">
    <property type="entry name" value="P-loop_NTPase"/>
</dbReference>
<dbReference type="InterPro" id="IPR005074">
    <property type="entry name" value="Peptidase_C39"/>
</dbReference>
<dbReference type="InterPro" id="IPR025662">
    <property type="entry name" value="Sigma_54_int_dom_ATP-bd_1"/>
</dbReference>
<dbReference type="InterPro" id="IPR039421">
    <property type="entry name" value="Type_1_exporter"/>
</dbReference>
<dbReference type="PANTHER" id="PTHR24221">
    <property type="entry name" value="ATP-BINDING CASSETTE SUB-FAMILY B"/>
    <property type="match status" value="1"/>
</dbReference>
<dbReference type="PANTHER" id="PTHR24221:SF654">
    <property type="entry name" value="ATP-BINDING CASSETTE SUB-FAMILY B MEMBER 6"/>
    <property type="match status" value="1"/>
</dbReference>
<dbReference type="Pfam" id="PF00664">
    <property type="entry name" value="ABC_membrane"/>
    <property type="match status" value="1"/>
</dbReference>
<dbReference type="Pfam" id="PF00005">
    <property type="entry name" value="ABC_tran"/>
    <property type="match status" value="1"/>
</dbReference>
<dbReference type="Pfam" id="PF03412">
    <property type="entry name" value="Peptidase_C39"/>
    <property type="match status" value="1"/>
</dbReference>
<dbReference type="SMART" id="SM00382">
    <property type="entry name" value="AAA"/>
    <property type="match status" value="1"/>
</dbReference>
<dbReference type="SUPFAM" id="SSF90123">
    <property type="entry name" value="ABC transporter transmembrane region"/>
    <property type="match status" value="1"/>
</dbReference>
<dbReference type="SUPFAM" id="SSF52540">
    <property type="entry name" value="P-loop containing nucleoside triphosphate hydrolases"/>
    <property type="match status" value="1"/>
</dbReference>
<dbReference type="PROSITE" id="PS50929">
    <property type="entry name" value="ABC_TM1F"/>
    <property type="match status" value="1"/>
</dbReference>
<dbReference type="PROSITE" id="PS50893">
    <property type="entry name" value="ABC_TRANSPORTER_2"/>
    <property type="match status" value="1"/>
</dbReference>
<dbReference type="PROSITE" id="PS50990">
    <property type="entry name" value="PEPTIDASE_C39"/>
    <property type="match status" value="1"/>
</dbReference>
<organism>
    <name type="scientific">Bacillus phage SPbeta</name>
    <name type="common">Bacillus phage SPBc2</name>
    <name type="synonym">Bacteriophage SP-beta</name>
    <dbReference type="NCBI Taxonomy" id="2932878"/>
    <lineage>
        <taxon>Viruses</taxon>
        <taxon>Duplodnaviria</taxon>
        <taxon>Heunggongvirae</taxon>
        <taxon>Uroviricota</taxon>
        <taxon>Caudoviricetes</taxon>
        <taxon>Spbetavirus</taxon>
        <taxon>Spbetavirus SPbeta</taxon>
    </lineage>
</organism>
<organismHost>
    <name type="scientific">Bacillus pumilus</name>
    <name type="common">Bacillus mesentericus</name>
    <dbReference type="NCBI Taxonomy" id="1408"/>
</organismHost>
<organismHost>
    <name type="scientific">Bacillus subtilis</name>
    <dbReference type="NCBI Taxonomy" id="1423"/>
</organismHost>
<sequence>MNKKKKYVHTKQFNSHDCGLACISSILKFHNLNYGIDFLLDLIGDKEGYSLRDLIVIFKKMGIKTRPLELQENKTFEALKQIKLPCIALLEGEEYGHYITIYEIRNNYLLVSDPDKDKITKIKKEDFESKFTNFILEIDKESIPEKEKDQKKHSYFFKDILFRNKLIVFVILLTSLFVVGLAVAGSFYIKFLVDLIIPRSLRESLITITLIFISMVLIRCIFDFVRSYLIIKLSYKVDKEMSNVYFNKVTKLPINFFENREDGEVISRFNDGIYIKDFFSANFVTAIIDIILILGLGVILYRTNNILFLTIILPILLLSCLAILFFDHLKKKNQKLMEDKAKSTSLLINFLKNMTTVYSLNKTSFFLEKFHLTYDKQLNSTFSVAKAVISNEILKGLIQNSFTIIILWVGTRQVLNDSMSLGTLLFINTLAAFLLSSLDRILSMQSDLQQAHVASIRFFDVVNYPVQQDSNENLTELDFIQNIKTVNLNIGADPMRYIVEDINLILDRKDKVLIIGESGTGKSTFAKSLSKLYKVPDKSIYLNGLDINRYDHLSIRKRIVYIDENPFLFKGTIKENLCMGEIFDQNEIENACIMSQCHEFICNLDKQYSYKLSENGSNLSTGQKQRLALARAILHQPQVLILDESLSNIDPDNTKLIYETLHRMDCLIILITHNDPSNFKYNKKLVFRNNRIIESSYSENKEYSI</sequence>
<protein>
    <recommendedName>
        <fullName>Sublancin-168-processing and transport ATP-binding protein sunT</fullName>
        <ecNumber>3.4.22.-</ecNumber>
        <ecNumber>7.-.-.-</ecNumber>
    </recommendedName>
</protein>
<name>SUNT_BPSPB</name>
<accession>P68580</accession>
<accession>O30671</accession>
<accession>O31988</accession>
<accession>O64034</accession>
<comment type="function">
    <text evidence="1">SunT (TC 3.A.1.112.4) is required for production of the lantibiotic sublancin-168, probably by both processing the signal peptide and exporting the resulting mature lantibiotic.</text>
</comment>
<comment type="subunit">
    <text evidence="1">Homodimer.</text>
</comment>
<comment type="subcellular location">
    <subcellularLocation>
        <location evidence="5">Host membrane</location>
        <topology evidence="5">Multi-pass membrane protein</topology>
    </subcellularLocation>
</comment>
<comment type="similarity">
    <text evidence="5">Belongs to the ABC transporter superfamily. SunT family.</text>
</comment>
<reference key="1">
    <citation type="journal article" date="1999" name="Microbiology">
        <title>Nucleotide sequence of the Bacillus subtilis temperate bacteriophage SPbetac2.</title>
        <authorList>
            <person name="Lazarevic V."/>
            <person name="Duesterhoeft A."/>
            <person name="Soldo B."/>
            <person name="Hilbert H."/>
            <person name="Mauel C."/>
            <person name="Karamata D."/>
        </authorList>
    </citation>
    <scope>NUCLEOTIDE SEQUENCE [LARGE SCALE GENOMIC DNA]</scope>
</reference>
<proteinExistence type="inferred from homology"/>
<feature type="chain" id="PRO_0000092982" description="Sublancin-168-processing and transport ATP-binding protein sunT">
    <location>
        <begin position="1"/>
        <end position="705"/>
    </location>
</feature>
<feature type="transmembrane region" description="Helical" evidence="4">
    <location>
        <begin position="167"/>
        <end position="187"/>
    </location>
</feature>
<feature type="transmembrane region" description="Helical" evidence="4">
    <location>
        <begin position="205"/>
        <end position="225"/>
    </location>
</feature>
<feature type="transmembrane region" description="Helical" evidence="4">
    <location>
        <begin position="281"/>
        <end position="301"/>
    </location>
</feature>
<feature type="transmembrane region" description="Helical" evidence="4">
    <location>
        <begin position="306"/>
        <end position="326"/>
    </location>
</feature>
<feature type="transmembrane region" description="Helical" evidence="4">
    <location>
        <begin position="388"/>
        <end position="408"/>
    </location>
</feature>
<feature type="transmembrane region" description="Helical" evidence="4">
    <location>
        <begin position="418"/>
        <end position="438"/>
    </location>
</feature>
<feature type="domain" description="Peptidase C39" evidence="2">
    <location>
        <begin position="12"/>
        <end position="138"/>
    </location>
</feature>
<feature type="domain" description="ABC transmembrane type-1" evidence="4">
    <location>
        <begin position="168"/>
        <end position="450"/>
    </location>
</feature>
<feature type="domain" description="ABC transporter" evidence="2 3">
    <location>
        <begin position="483"/>
        <end position="705"/>
    </location>
</feature>
<feature type="active site" evidence="2">
    <location>
        <position position="18"/>
    </location>
</feature>
<feature type="binding site" evidence="2 3">
    <location>
        <begin position="516"/>
        <end position="523"/>
    </location>
    <ligand>
        <name>ATP</name>
        <dbReference type="ChEBI" id="CHEBI:30616"/>
    </ligand>
</feature>
<gene>
    <name type="primary">sunT</name>
    <name type="ordered locus">SPBc2p021</name>
</gene>